<comment type="function">
    <text evidence="1">DNA helicase that possesses intrinsic ATP-dependent nucleosome-remodeling activity and is required for heterochromatin organization.</text>
</comment>
<comment type="catalytic activity">
    <reaction>
        <text>ATP + H2O = ADP + phosphate + H(+)</text>
        <dbReference type="Rhea" id="RHEA:13065"/>
        <dbReference type="ChEBI" id="CHEBI:15377"/>
        <dbReference type="ChEBI" id="CHEBI:15378"/>
        <dbReference type="ChEBI" id="CHEBI:30616"/>
        <dbReference type="ChEBI" id="CHEBI:43474"/>
        <dbReference type="ChEBI" id="CHEBI:456216"/>
        <dbReference type="EC" id="3.6.4.12"/>
    </reaction>
</comment>
<comment type="subcellular location">
    <subcellularLocation>
        <location evidence="5">Nucleus</location>
    </subcellularLocation>
</comment>
<comment type="similarity">
    <text evidence="6">Belongs to the SNF2/RAD54 helicase family.</text>
</comment>
<evidence type="ECO:0000250" key="1"/>
<evidence type="ECO:0000255" key="2">
    <source>
        <dbReference type="PROSITE-ProRule" id="PRU00541"/>
    </source>
</evidence>
<evidence type="ECO:0000255" key="3">
    <source>
        <dbReference type="PROSITE-ProRule" id="PRU00542"/>
    </source>
</evidence>
<evidence type="ECO:0000256" key="4">
    <source>
        <dbReference type="SAM" id="MobiDB-lite"/>
    </source>
</evidence>
<evidence type="ECO:0000269" key="5">
    <source>
    </source>
</evidence>
<evidence type="ECO:0000305" key="6"/>
<name>FFT1_SCHPO</name>
<proteinExistence type="inferred from homology"/>
<reference key="1">
    <citation type="journal article" date="2002" name="Nature">
        <title>The genome sequence of Schizosaccharomyces pombe.</title>
        <authorList>
            <person name="Wood V."/>
            <person name="Gwilliam R."/>
            <person name="Rajandream M.A."/>
            <person name="Lyne M.H."/>
            <person name="Lyne R."/>
            <person name="Stewart A."/>
            <person name="Sgouros J.G."/>
            <person name="Peat N."/>
            <person name="Hayles J."/>
            <person name="Baker S.G."/>
            <person name="Basham D."/>
            <person name="Bowman S."/>
            <person name="Brooks K."/>
            <person name="Brown D."/>
            <person name="Brown S."/>
            <person name="Chillingworth T."/>
            <person name="Churcher C.M."/>
            <person name="Collins M."/>
            <person name="Connor R."/>
            <person name="Cronin A."/>
            <person name="Davis P."/>
            <person name="Feltwell T."/>
            <person name="Fraser A."/>
            <person name="Gentles S."/>
            <person name="Goble A."/>
            <person name="Hamlin N."/>
            <person name="Harris D.E."/>
            <person name="Hidalgo J."/>
            <person name="Hodgson G."/>
            <person name="Holroyd S."/>
            <person name="Hornsby T."/>
            <person name="Howarth S."/>
            <person name="Huckle E.J."/>
            <person name="Hunt S."/>
            <person name="Jagels K."/>
            <person name="James K.D."/>
            <person name="Jones L."/>
            <person name="Jones M."/>
            <person name="Leather S."/>
            <person name="McDonald S."/>
            <person name="McLean J."/>
            <person name="Mooney P."/>
            <person name="Moule S."/>
            <person name="Mungall K.L."/>
            <person name="Murphy L.D."/>
            <person name="Niblett D."/>
            <person name="Odell C."/>
            <person name="Oliver K."/>
            <person name="O'Neil S."/>
            <person name="Pearson D."/>
            <person name="Quail M.A."/>
            <person name="Rabbinowitsch E."/>
            <person name="Rutherford K.M."/>
            <person name="Rutter S."/>
            <person name="Saunders D."/>
            <person name="Seeger K."/>
            <person name="Sharp S."/>
            <person name="Skelton J."/>
            <person name="Simmonds M.N."/>
            <person name="Squares R."/>
            <person name="Squares S."/>
            <person name="Stevens K."/>
            <person name="Taylor K."/>
            <person name="Taylor R.G."/>
            <person name="Tivey A."/>
            <person name="Walsh S.V."/>
            <person name="Warren T."/>
            <person name="Whitehead S."/>
            <person name="Woodward J.R."/>
            <person name="Volckaert G."/>
            <person name="Aert R."/>
            <person name="Robben J."/>
            <person name="Grymonprez B."/>
            <person name="Weltjens I."/>
            <person name="Vanstreels E."/>
            <person name="Rieger M."/>
            <person name="Schaefer M."/>
            <person name="Mueller-Auer S."/>
            <person name="Gabel C."/>
            <person name="Fuchs M."/>
            <person name="Duesterhoeft A."/>
            <person name="Fritzc C."/>
            <person name="Holzer E."/>
            <person name="Moestl D."/>
            <person name="Hilbert H."/>
            <person name="Borzym K."/>
            <person name="Langer I."/>
            <person name="Beck A."/>
            <person name="Lehrach H."/>
            <person name="Reinhardt R."/>
            <person name="Pohl T.M."/>
            <person name="Eger P."/>
            <person name="Zimmermann W."/>
            <person name="Wedler H."/>
            <person name="Wambutt R."/>
            <person name="Purnelle B."/>
            <person name="Goffeau A."/>
            <person name="Cadieu E."/>
            <person name="Dreano S."/>
            <person name="Gloux S."/>
            <person name="Lelaure V."/>
            <person name="Mottier S."/>
            <person name="Galibert F."/>
            <person name="Aves S.J."/>
            <person name="Xiang Z."/>
            <person name="Hunt C."/>
            <person name="Moore K."/>
            <person name="Hurst S.M."/>
            <person name="Lucas M."/>
            <person name="Rochet M."/>
            <person name="Gaillardin C."/>
            <person name="Tallada V.A."/>
            <person name="Garzon A."/>
            <person name="Thode G."/>
            <person name="Daga R.R."/>
            <person name="Cruzado L."/>
            <person name="Jimenez J."/>
            <person name="Sanchez M."/>
            <person name="del Rey F."/>
            <person name="Benito J."/>
            <person name="Dominguez A."/>
            <person name="Revuelta J.L."/>
            <person name="Moreno S."/>
            <person name="Armstrong J."/>
            <person name="Forsburg S.L."/>
            <person name="Cerutti L."/>
            <person name="Lowe T."/>
            <person name="McCombie W.R."/>
            <person name="Paulsen I."/>
            <person name="Potashkin J."/>
            <person name="Shpakovski G.V."/>
            <person name="Ussery D."/>
            <person name="Barrell B.G."/>
            <person name="Nurse P."/>
        </authorList>
    </citation>
    <scope>NUCLEOTIDE SEQUENCE [LARGE SCALE GENOMIC DNA]</scope>
    <source>
        <strain>972 / ATCC 24843</strain>
    </source>
</reference>
<reference key="2">
    <citation type="journal article" date="2006" name="Nat. Biotechnol.">
        <title>ORFeome cloning and global analysis of protein localization in the fission yeast Schizosaccharomyces pombe.</title>
        <authorList>
            <person name="Matsuyama A."/>
            <person name="Arai R."/>
            <person name="Yashiroda Y."/>
            <person name="Shirai A."/>
            <person name="Kamata A."/>
            <person name="Sekido S."/>
            <person name="Kobayashi Y."/>
            <person name="Hashimoto A."/>
            <person name="Hamamoto M."/>
            <person name="Hiraoka Y."/>
            <person name="Horinouchi S."/>
            <person name="Yoshida M."/>
        </authorList>
    </citation>
    <scope>SUBCELLULAR LOCATION [LARGE SCALE ANALYSIS]</scope>
</reference>
<feature type="chain" id="PRO_0000310747" description="ATP-dependent helicase fft1">
    <location>
        <begin position="1"/>
        <end position="944"/>
    </location>
</feature>
<feature type="domain" description="Helicase ATP-binding" evidence="2">
    <location>
        <begin position="426"/>
        <end position="592"/>
    </location>
</feature>
<feature type="domain" description="Helicase C-terminal" evidence="3">
    <location>
        <begin position="766"/>
        <end position="923"/>
    </location>
</feature>
<feature type="region of interest" description="Disordered" evidence="4">
    <location>
        <begin position="89"/>
        <end position="109"/>
    </location>
</feature>
<feature type="region of interest" description="Disordered" evidence="4">
    <location>
        <begin position="174"/>
        <end position="246"/>
    </location>
</feature>
<feature type="short sequence motif" description="DEGH box">
    <location>
        <begin position="543"/>
        <end position="546"/>
    </location>
</feature>
<feature type="compositionally biased region" description="Basic and acidic residues" evidence="4">
    <location>
        <begin position="92"/>
        <end position="108"/>
    </location>
</feature>
<feature type="compositionally biased region" description="Polar residues" evidence="4">
    <location>
        <begin position="174"/>
        <end position="184"/>
    </location>
</feature>
<feature type="compositionally biased region" description="Basic and acidic residues" evidence="4">
    <location>
        <begin position="186"/>
        <end position="203"/>
    </location>
</feature>
<feature type="compositionally biased region" description="Acidic residues" evidence="4">
    <location>
        <begin position="217"/>
        <end position="227"/>
    </location>
</feature>
<feature type="compositionally biased region" description="Polar residues" evidence="4">
    <location>
        <begin position="230"/>
        <end position="246"/>
    </location>
</feature>
<feature type="binding site" evidence="2">
    <location>
        <begin position="439"/>
        <end position="446"/>
    </location>
    <ligand>
        <name>ATP</name>
        <dbReference type="ChEBI" id="CHEBI:30616"/>
    </ligand>
</feature>
<gene>
    <name type="primary">fft1</name>
    <name type="ORF">SPAC20G8.08c</name>
</gene>
<accession>P87114</accession>
<protein>
    <recommendedName>
        <fullName>ATP-dependent helicase fft1</fullName>
        <ecNumber>3.6.4.12</ecNumber>
    </recommendedName>
    <alternativeName>
        <fullName>Fun thirty-related protein 1</fullName>
    </alternativeName>
</protein>
<dbReference type="EC" id="3.6.4.12"/>
<dbReference type="EMBL" id="CU329670">
    <property type="protein sequence ID" value="CAB08602.1"/>
    <property type="molecule type" value="Genomic_DNA"/>
</dbReference>
<dbReference type="PIR" id="T38130">
    <property type="entry name" value="T38130"/>
</dbReference>
<dbReference type="RefSeq" id="NP_593325.1">
    <property type="nucleotide sequence ID" value="NM_001018756.2"/>
</dbReference>
<dbReference type="SMR" id="P87114"/>
<dbReference type="BioGRID" id="278468">
    <property type="interactions" value="6"/>
</dbReference>
<dbReference type="FunCoup" id="P87114">
    <property type="interactions" value="1107"/>
</dbReference>
<dbReference type="STRING" id="284812.P87114"/>
<dbReference type="iPTMnet" id="P87114"/>
<dbReference type="PaxDb" id="4896-SPAC20G8.08c.1"/>
<dbReference type="EnsemblFungi" id="SPAC20G8.08c.1">
    <property type="protein sequence ID" value="SPAC20G8.08c.1:pep"/>
    <property type="gene ID" value="SPAC20G8.08c"/>
</dbReference>
<dbReference type="GeneID" id="2541983"/>
<dbReference type="KEGG" id="spo:2541983"/>
<dbReference type="PomBase" id="SPAC20G8.08c">
    <property type="gene designation" value="fft1"/>
</dbReference>
<dbReference type="VEuPathDB" id="FungiDB:SPAC20G8.08c"/>
<dbReference type="eggNOG" id="KOG0389">
    <property type="taxonomic scope" value="Eukaryota"/>
</dbReference>
<dbReference type="HOGENOM" id="CLU_000315_16_3_1"/>
<dbReference type="InParanoid" id="P87114"/>
<dbReference type="OMA" id="AGGSKYC"/>
<dbReference type="PhylomeDB" id="P87114"/>
<dbReference type="PRO" id="PR:P87114"/>
<dbReference type="Proteomes" id="UP000002485">
    <property type="component" value="Chromosome I"/>
</dbReference>
<dbReference type="GO" id="GO:0000785">
    <property type="term" value="C:chromatin"/>
    <property type="evidence" value="ECO:0000318"/>
    <property type="project" value="GO_Central"/>
</dbReference>
<dbReference type="GO" id="GO:0005634">
    <property type="term" value="C:nucleus"/>
    <property type="evidence" value="ECO:0007005"/>
    <property type="project" value="PomBase"/>
</dbReference>
<dbReference type="GO" id="GO:0005524">
    <property type="term" value="F:ATP binding"/>
    <property type="evidence" value="ECO:0000255"/>
    <property type="project" value="PomBase"/>
</dbReference>
<dbReference type="GO" id="GO:0016887">
    <property type="term" value="F:ATP hydrolysis activity"/>
    <property type="evidence" value="ECO:0007669"/>
    <property type="project" value="RHEA"/>
</dbReference>
<dbReference type="GO" id="GO:0003682">
    <property type="term" value="F:chromatin binding"/>
    <property type="evidence" value="ECO:0000318"/>
    <property type="project" value="GO_Central"/>
</dbReference>
<dbReference type="GO" id="GO:0003677">
    <property type="term" value="F:DNA binding"/>
    <property type="evidence" value="ECO:0000318"/>
    <property type="project" value="GO_Central"/>
</dbReference>
<dbReference type="GO" id="GO:0004386">
    <property type="term" value="F:helicase activity"/>
    <property type="evidence" value="ECO:0007669"/>
    <property type="project" value="UniProtKB-KW"/>
</dbReference>
<dbReference type="GO" id="GO:0140750">
    <property type="term" value="F:nucleosome array spacer activity"/>
    <property type="evidence" value="ECO:0000318"/>
    <property type="project" value="GO_Central"/>
</dbReference>
<dbReference type="GO" id="GO:0000729">
    <property type="term" value="P:DNA double-strand break processing"/>
    <property type="evidence" value="ECO:0000318"/>
    <property type="project" value="GO_Central"/>
</dbReference>
<dbReference type="GO" id="GO:0045944">
    <property type="term" value="P:positive regulation of transcription by RNA polymerase II"/>
    <property type="evidence" value="ECO:0000318"/>
    <property type="project" value="GO_Central"/>
</dbReference>
<dbReference type="CDD" id="cd17998">
    <property type="entry name" value="DEXHc_SMARCAD1"/>
    <property type="match status" value="1"/>
</dbReference>
<dbReference type="CDD" id="cd18793">
    <property type="entry name" value="SF2_C_SNF"/>
    <property type="match status" value="1"/>
</dbReference>
<dbReference type="FunFam" id="3.40.50.300:FF:003518">
    <property type="entry name" value="ATP-dependent helicase fft1"/>
    <property type="match status" value="1"/>
</dbReference>
<dbReference type="FunFam" id="3.40.50.10810:FF:000014">
    <property type="entry name" value="SWI/SNF-related matrix-associated actin-dependent regulator of chromatin subfamily A containing DEAD/H box 1"/>
    <property type="match status" value="1"/>
</dbReference>
<dbReference type="Gene3D" id="3.40.50.300">
    <property type="entry name" value="P-loop containing nucleotide triphosphate hydrolases"/>
    <property type="match status" value="1"/>
</dbReference>
<dbReference type="Gene3D" id="3.40.50.10810">
    <property type="entry name" value="Tandem AAA-ATPase domain"/>
    <property type="match status" value="1"/>
</dbReference>
<dbReference type="InterPro" id="IPR014001">
    <property type="entry name" value="Helicase_ATP-bd"/>
</dbReference>
<dbReference type="InterPro" id="IPR001650">
    <property type="entry name" value="Helicase_C-like"/>
</dbReference>
<dbReference type="InterPro" id="IPR027417">
    <property type="entry name" value="P-loop_NTPase"/>
</dbReference>
<dbReference type="InterPro" id="IPR038718">
    <property type="entry name" value="SNF2-like_sf"/>
</dbReference>
<dbReference type="InterPro" id="IPR049730">
    <property type="entry name" value="SNF2/RAD54-like_C"/>
</dbReference>
<dbReference type="InterPro" id="IPR000330">
    <property type="entry name" value="SNF2_N"/>
</dbReference>
<dbReference type="PANTHER" id="PTHR10799">
    <property type="entry name" value="SNF2/RAD54 HELICASE FAMILY"/>
    <property type="match status" value="1"/>
</dbReference>
<dbReference type="Pfam" id="PF00271">
    <property type="entry name" value="Helicase_C"/>
    <property type="match status" value="1"/>
</dbReference>
<dbReference type="Pfam" id="PF00176">
    <property type="entry name" value="SNF2-rel_dom"/>
    <property type="match status" value="1"/>
</dbReference>
<dbReference type="SMART" id="SM00487">
    <property type="entry name" value="DEXDc"/>
    <property type="match status" value="1"/>
</dbReference>
<dbReference type="SMART" id="SM00490">
    <property type="entry name" value="HELICc"/>
    <property type="match status" value="1"/>
</dbReference>
<dbReference type="SUPFAM" id="SSF52540">
    <property type="entry name" value="P-loop containing nucleoside triphosphate hydrolases"/>
    <property type="match status" value="2"/>
</dbReference>
<dbReference type="PROSITE" id="PS51192">
    <property type="entry name" value="HELICASE_ATP_BIND_1"/>
    <property type="match status" value="1"/>
</dbReference>
<dbReference type="PROSITE" id="PS51194">
    <property type="entry name" value="HELICASE_CTER"/>
    <property type="match status" value="1"/>
</dbReference>
<sequence length="944" mass="108252">MKRKDNKELICIPSSSPPSTPIREENYYLLTSSPIECSPIQQLDLSGSFKNYSTTSSRANGKKFGQLAMQSRIFFDTTDHKKYVESSYAAYDPHDQPPERDVSLKESSNKINPSNFFDSEQITKINAVKKRFPALDSEMIIATLEKFNWRENITIHKLTFQKLLGRGNSTINKSAQKLNNQPIEKSSVDKENAKRKRYVEEGTKQGQKKKPLRVIELSDEETNEDDLLGQSPTACTTDANIDNSIPENSDKIEEVSIESSGPSEVEDEMSEYDVRVLNFLNESTLQEIVEVSGCESKVVEYFISKRPFPSLEKAEALCQRNAHAATGKRKKSDGRNVGRKLVNSTYEVLQGFDAVDSLIAKCERYGAMISNTMRSWHNLFDDKKMEQFLNTSTGSISYEYNSQQPSSIASGITLKSYQIVGLNWLCLMYKAKLSGILADEMGLGKTCQVISFLASLKEKGIQNRHLVVVPSSTLGNWLREFEKFCPSLRVESYSGTQSERINKRYYLMDTDFDVLVTTYQLASGSRDDRSFLRKQRFDISIFDEGHYLKNRMSERYKHLMNIPANFRLLITGTPLQNNLKELISLLAFMLPKVFDNNMQGLDIIYKIKTTSDGDIERAYLSQERISRAKTIMNPFILRRRKENVLSDLPPKIQHVEYCHMEETQLSLYLSVLELKNLVNANRENILMQLRKAALHQLLFRSQYNLETLSLMSKRILREDAYLDANPQYIFEDMEVMSDFELHKLADQYRHLHPFALKGKPWMDSAKVKKLCSLLKKSRPNERILIFSQFTQVLDILEYVLNTLDLEFLRLDGSTPVETRQQLIDDFHTNENYKVFLLSTKSGGFGINLTCANIVILFDCSFNPFDDMQAEDRAHRVGQTRPVHVYRLITKNTIEENIRRLANTKLTLESSLTTDSEKIQKEISGELMKSLQMDGRVDTMDGSVV</sequence>
<keyword id="KW-0067">ATP-binding</keyword>
<keyword id="KW-0156">Chromatin regulator</keyword>
<keyword id="KW-0238">DNA-binding</keyword>
<keyword id="KW-0347">Helicase</keyword>
<keyword id="KW-0378">Hydrolase</keyword>
<keyword id="KW-0547">Nucleotide-binding</keyword>
<keyword id="KW-0539">Nucleus</keyword>
<keyword id="KW-1185">Reference proteome</keyword>
<organism>
    <name type="scientific">Schizosaccharomyces pombe (strain 972 / ATCC 24843)</name>
    <name type="common">Fission yeast</name>
    <dbReference type="NCBI Taxonomy" id="284812"/>
    <lineage>
        <taxon>Eukaryota</taxon>
        <taxon>Fungi</taxon>
        <taxon>Dikarya</taxon>
        <taxon>Ascomycota</taxon>
        <taxon>Taphrinomycotina</taxon>
        <taxon>Schizosaccharomycetes</taxon>
        <taxon>Schizosaccharomycetales</taxon>
        <taxon>Schizosaccharomycetaceae</taxon>
        <taxon>Schizosaccharomyces</taxon>
    </lineage>
</organism>